<protein>
    <recommendedName>
        <fullName>Caroteno-chlorophyll a-c-binding protein</fullName>
    </recommendedName>
</protein>
<comment type="function">
    <text>The light-harvesting complex (LHC) functions as a light receptor, it captures and delivers excitation energy to photosystems with which it is closely associated.</text>
</comment>
<comment type="cofactor">
    <text evidence="1">Binds at least 14 chlorophylls (8 Chl-a and 6 Chl-b) and carotenoids such as lutein and neoxanthin.</text>
</comment>
<comment type="subunit">
    <text>The LHC complex consists of chlorophyll a-b binding proteins.</text>
</comment>
<comment type="subcellular location">
    <subcellularLocation>
        <location>Plastid</location>
        <location>Chloroplast thylakoid membrane</location>
        <topology>Multi-pass membrane protein</topology>
    </subcellularLocation>
</comment>
<comment type="domain">
    <text>The N-terminus of the protein extends into the stroma where it is involved with adhesion of granal membranes and post-translational modifications; both are believed to mediate the distribution of excitation energy between photosystems I and II.</text>
</comment>
<comment type="PTM">
    <text evidence="1">Photoregulated by reversible phosphorylation of its threonine residues.</text>
</comment>
<comment type="similarity">
    <text evidence="3">Belongs to the light-harvesting chlorophyll a/b-binding (LHC) protein family.</text>
</comment>
<feature type="chain" id="PRO_0000165480" description="Caroteno-chlorophyll a-c-binding protein">
    <location>
        <begin position="1" status="less than"/>
        <end position="102" status="greater than"/>
    </location>
</feature>
<feature type="transmembrane region" description="Helical" evidence="2">
    <location>
        <begin position="78"/>
        <end position="98"/>
    </location>
</feature>
<feature type="binding site" description="axial binding residue" evidence="1">
    <location>
        <position position="36"/>
    </location>
    <ligand>
        <name>chlorophyll a</name>
        <dbReference type="ChEBI" id="CHEBI:58416"/>
        <label>1</label>
    </ligand>
    <ligandPart>
        <name>Mg</name>
        <dbReference type="ChEBI" id="CHEBI:25107"/>
    </ligandPart>
</feature>
<feature type="binding site" description="axial binding residue" evidence="1">
    <location>
        <position position="39"/>
    </location>
    <ligand>
        <name>chlorophyll a</name>
        <dbReference type="ChEBI" id="CHEBI:58416"/>
        <label>2</label>
    </ligand>
    <ligandPart>
        <name>Mg</name>
        <dbReference type="ChEBI" id="CHEBI:25107"/>
    </ligandPart>
</feature>
<feature type="non-terminal residue">
    <location>
        <position position="1"/>
    </location>
</feature>
<feature type="non-terminal residue">
    <location>
        <position position="102"/>
    </location>
</feature>
<accession>P55738</accession>
<keyword id="KW-0148">Chlorophyll</keyword>
<keyword id="KW-0150">Chloroplast</keyword>
<keyword id="KW-0157">Chromophore</keyword>
<keyword id="KW-0903">Direct protein sequencing</keyword>
<keyword id="KW-0460">Magnesium</keyword>
<keyword id="KW-0472">Membrane</keyword>
<keyword id="KW-0479">Metal-binding</keyword>
<keyword id="KW-0597">Phosphoprotein</keyword>
<keyword id="KW-0602">Photosynthesis</keyword>
<keyword id="KW-0603">Photosystem I</keyword>
<keyword id="KW-0604">Photosystem II</keyword>
<keyword id="KW-0934">Plastid</keyword>
<keyword id="KW-0793">Thylakoid</keyword>
<keyword id="KW-0812">Transmembrane</keyword>
<keyword id="KW-1133">Transmembrane helix</keyword>
<evidence type="ECO:0000250" key="1"/>
<evidence type="ECO:0000255" key="2"/>
<evidence type="ECO:0000305" key="3"/>
<name>CCAC_AMPCA</name>
<proteinExistence type="evidence at protein level"/>
<dbReference type="GO" id="GO:0009535">
    <property type="term" value="C:chloroplast thylakoid membrane"/>
    <property type="evidence" value="ECO:0007669"/>
    <property type="project" value="UniProtKB-SubCell"/>
</dbReference>
<dbReference type="GO" id="GO:0009522">
    <property type="term" value="C:photosystem I"/>
    <property type="evidence" value="ECO:0007669"/>
    <property type="project" value="UniProtKB-KW"/>
</dbReference>
<dbReference type="GO" id="GO:0009523">
    <property type="term" value="C:photosystem II"/>
    <property type="evidence" value="ECO:0007669"/>
    <property type="project" value="UniProtKB-KW"/>
</dbReference>
<dbReference type="GO" id="GO:0016168">
    <property type="term" value="F:chlorophyll binding"/>
    <property type="evidence" value="ECO:0007669"/>
    <property type="project" value="UniProtKB-KW"/>
</dbReference>
<dbReference type="GO" id="GO:0046872">
    <property type="term" value="F:metal ion binding"/>
    <property type="evidence" value="ECO:0007669"/>
    <property type="project" value="UniProtKB-KW"/>
</dbReference>
<dbReference type="GO" id="GO:0009765">
    <property type="term" value="P:photosynthesis, light harvesting"/>
    <property type="evidence" value="ECO:0007669"/>
    <property type="project" value="InterPro"/>
</dbReference>
<dbReference type="Gene3D" id="1.10.3460.10">
    <property type="entry name" value="Chlorophyll a/b binding protein domain"/>
    <property type="match status" value="1"/>
</dbReference>
<dbReference type="InterPro" id="IPR001344">
    <property type="entry name" value="Chloro_AB-bd_pln"/>
</dbReference>
<dbReference type="InterPro" id="IPR022796">
    <property type="entry name" value="Chloroa_b-bind"/>
</dbReference>
<dbReference type="PANTHER" id="PTHR21649">
    <property type="entry name" value="CHLOROPHYLL A/B BINDING PROTEIN"/>
    <property type="match status" value="1"/>
</dbReference>
<dbReference type="Pfam" id="PF00504">
    <property type="entry name" value="Chloroa_b-bind"/>
    <property type="match status" value="1"/>
</dbReference>
<dbReference type="SUPFAM" id="SSF103511">
    <property type="entry name" value="Chlorophyll a-b binding protein"/>
    <property type="match status" value="1"/>
</dbReference>
<sequence length="102" mass="10951">XFENERGVADPVGFFDPLGFTADGSVENFKKLAQTEIKHGRVAMLATMGYITQEITGKLPGYLSPSTGVKYDDDINGVLGLIKIVPAGLWGIMIFYAALSLA</sequence>
<reference key="1">
    <citation type="journal article" date="1993" name="Photochem. Photobiol.">
        <title>The major intrinsic light-harvesting protein of Amphidinium: characterization and relation to other light-harvesting proteins.</title>
        <authorList>
            <person name="Hiller R.G."/>
            <person name="Wrench P.M."/>
            <person name="Gooley A.P."/>
            <person name="Shoebridge G."/>
            <person name="Breton J."/>
        </authorList>
    </citation>
    <scope>PROTEIN SEQUENCE</scope>
</reference>
<organism>
    <name type="scientific">Amphidinium carterae</name>
    <name type="common">Dinoflagellate</name>
    <dbReference type="NCBI Taxonomy" id="2961"/>
    <lineage>
        <taxon>Eukaryota</taxon>
        <taxon>Sar</taxon>
        <taxon>Alveolata</taxon>
        <taxon>Dinophyceae</taxon>
        <taxon>Amphidiniales</taxon>
        <taxon>Amphidiniaceae</taxon>
        <taxon>Amphidinium</taxon>
    </lineage>
</organism>